<feature type="chain" id="PRO_0000208599" description="Light-independent protochlorophyllide reductase subunit N">
    <location>
        <begin position="1"/>
        <end position="467"/>
    </location>
</feature>
<feature type="binding site" evidence="1">
    <location>
        <position position="23"/>
    </location>
    <ligand>
        <name>[4Fe-4S] cluster</name>
        <dbReference type="ChEBI" id="CHEBI:49883"/>
        <note>ligand shared with heterodimeric partner</note>
    </ligand>
</feature>
<feature type="binding site" evidence="1">
    <location>
        <position position="48"/>
    </location>
    <ligand>
        <name>[4Fe-4S] cluster</name>
        <dbReference type="ChEBI" id="CHEBI:49883"/>
        <note>ligand shared with heterodimeric partner</note>
    </ligand>
</feature>
<feature type="binding site" evidence="1">
    <location>
        <position position="108"/>
    </location>
    <ligand>
        <name>[4Fe-4S] cluster</name>
        <dbReference type="ChEBI" id="CHEBI:49883"/>
        <note>ligand shared with heterodimeric partner</note>
    </ligand>
</feature>
<sequence>MTIAQEPTALNFECETGNYHTFCPISCVAWLYQKIEDSFFLVIGTKTCGYFLQNAMGVMIFAEPRYAMAELEEGDISAQLNDYAELKRLCEQIKRDRNPSVIVWIGTCTTEIIKMDLEGLAPKLEGEIGIPIVVARANGLDYAFTQGEDTVLAAMAHRCPDKAPVAEAEKNERNAVQKLLNFGKKKELVAQEESEYVDHPPLVLFGSLPDPVVTQLTLELKKQGIKVSGWLPAKRFTELPVLEEGYYVAGVNPFLSRTATTLMRRRKCKLIGAPFPIGPDGTRAWIEKICSVFGITPKGLDEREAQIWAGLEDYVKLIRGKSVFFMGDNLLEVSLARFLVRCGMTVQEVGIPYMDKRYQAAELAMLEKACQEMGVPSPKMVEKPDNYNQVQRIYDLKPDLVITGMAHANPLEARGINTKWSVEFTFAQIHGFTNARDILELVTRPLRRNNNLKDLGWDKLVREEAKI</sequence>
<proteinExistence type="inferred from homology"/>
<name>CHLN_NOSS1</name>
<evidence type="ECO:0000255" key="1">
    <source>
        <dbReference type="HAMAP-Rule" id="MF_00352"/>
    </source>
</evidence>
<protein>
    <recommendedName>
        <fullName evidence="1">Light-independent protochlorophyllide reductase subunit N</fullName>
        <shortName evidence="1">DPOR subunit N</shortName>
        <shortName evidence="1">LI-POR subunit N</shortName>
        <ecNumber evidence="1">1.3.7.7</ecNumber>
    </recommendedName>
</protein>
<keyword id="KW-0004">4Fe-4S</keyword>
<keyword id="KW-0067">ATP-binding</keyword>
<keyword id="KW-0149">Chlorophyll biosynthesis</keyword>
<keyword id="KW-0408">Iron</keyword>
<keyword id="KW-0411">Iron-sulfur</keyword>
<keyword id="KW-0479">Metal-binding</keyword>
<keyword id="KW-0547">Nucleotide-binding</keyword>
<keyword id="KW-0560">Oxidoreductase</keyword>
<keyword id="KW-0602">Photosynthesis</keyword>
<keyword id="KW-1185">Reference proteome</keyword>
<reference key="1">
    <citation type="journal article" date="2001" name="DNA Res.">
        <title>Complete genomic sequence of the filamentous nitrogen-fixing cyanobacterium Anabaena sp. strain PCC 7120.</title>
        <authorList>
            <person name="Kaneko T."/>
            <person name="Nakamura Y."/>
            <person name="Wolk C.P."/>
            <person name="Kuritz T."/>
            <person name="Sasamoto S."/>
            <person name="Watanabe A."/>
            <person name="Iriguchi M."/>
            <person name="Ishikawa A."/>
            <person name="Kawashima K."/>
            <person name="Kimura T."/>
            <person name="Kishida Y."/>
            <person name="Kohara M."/>
            <person name="Matsumoto M."/>
            <person name="Matsuno A."/>
            <person name="Muraki A."/>
            <person name="Nakazaki N."/>
            <person name="Shimpo S."/>
            <person name="Sugimoto M."/>
            <person name="Takazawa M."/>
            <person name="Yamada M."/>
            <person name="Yasuda M."/>
            <person name="Tabata S."/>
        </authorList>
    </citation>
    <scope>NUCLEOTIDE SEQUENCE [LARGE SCALE GENOMIC DNA]</scope>
    <source>
        <strain>PCC 7120 / SAG 25.82 / UTEX 2576</strain>
    </source>
</reference>
<organism>
    <name type="scientific">Nostoc sp. (strain PCC 7120 / SAG 25.82 / UTEX 2576)</name>
    <dbReference type="NCBI Taxonomy" id="103690"/>
    <lineage>
        <taxon>Bacteria</taxon>
        <taxon>Bacillati</taxon>
        <taxon>Cyanobacteriota</taxon>
        <taxon>Cyanophyceae</taxon>
        <taxon>Nostocales</taxon>
        <taxon>Nostocaceae</taxon>
        <taxon>Nostoc</taxon>
    </lineage>
</organism>
<accession>Q8YM64</accession>
<gene>
    <name evidence="1" type="primary">chlN</name>
    <name type="ordered locus">all5076</name>
</gene>
<dbReference type="EC" id="1.3.7.7" evidence="1"/>
<dbReference type="EMBL" id="BA000019">
    <property type="protein sequence ID" value="BAB76775.1"/>
    <property type="molecule type" value="Genomic_DNA"/>
</dbReference>
<dbReference type="PIR" id="AD2440">
    <property type="entry name" value="AD2440"/>
</dbReference>
<dbReference type="RefSeq" id="WP_010999202.1">
    <property type="nucleotide sequence ID" value="NZ_RSCN01000014.1"/>
</dbReference>
<dbReference type="SMR" id="Q8YM64"/>
<dbReference type="STRING" id="103690.gene:10497134"/>
<dbReference type="KEGG" id="ana:all5076"/>
<dbReference type="eggNOG" id="COG2710">
    <property type="taxonomic scope" value="Bacteria"/>
</dbReference>
<dbReference type="OrthoDB" id="5714774at2"/>
<dbReference type="UniPathway" id="UPA00670"/>
<dbReference type="Proteomes" id="UP000002483">
    <property type="component" value="Chromosome"/>
</dbReference>
<dbReference type="GO" id="GO:0051539">
    <property type="term" value="F:4 iron, 4 sulfur cluster binding"/>
    <property type="evidence" value="ECO:0007669"/>
    <property type="project" value="UniProtKB-UniRule"/>
</dbReference>
<dbReference type="GO" id="GO:0005524">
    <property type="term" value="F:ATP binding"/>
    <property type="evidence" value="ECO:0007669"/>
    <property type="project" value="UniProtKB-UniRule"/>
</dbReference>
<dbReference type="GO" id="GO:0046872">
    <property type="term" value="F:metal ion binding"/>
    <property type="evidence" value="ECO:0007669"/>
    <property type="project" value="UniProtKB-KW"/>
</dbReference>
<dbReference type="GO" id="GO:0016730">
    <property type="term" value="F:oxidoreductase activity, acting on iron-sulfur proteins as donors"/>
    <property type="evidence" value="ECO:0007669"/>
    <property type="project" value="InterPro"/>
</dbReference>
<dbReference type="GO" id="GO:0016636">
    <property type="term" value="F:oxidoreductase activity, acting on the CH-CH group of donors, iron-sulfur protein as acceptor"/>
    <property type="evidence" value="ECO:0007669"/>
    <property type="project" value="UniProtKB-UniRule"/>
</dbReference>
<dbReference type="GO" id="GO:0036068">
    <property type="term" value="P:light-independent chlorophyll biosynthetic process"/>
    <property type="evidence" value="ECO:0007669"/>
    <property type="project" value="UniProtKB-UniRule"/>
</dbReference>
<dbReference type="GO" id="GO:0019685">
    <property type="term" value="P:photosynthesis, dark reaction"/>
    <property type="evidence" value="ECO:0007669"/>
    <property type="project" value="InterPro"/>
</dbReference>
<dbReference type="CDD" id="cd01979">
    <property type="entry name" value="Pchlide_reductase_N"/>
    <property type="match status" value="1"/>
</dbReference>
<dbReference type="Gene3D" id="3.40.50.1980">
    <property type="entry name" value="Nitrogenase molybdenum iron protein domain"/>
    <property type="match status" value="3"/>
</dbReference>
<dbReference type="HAMAP" id="MF_00352">
    <property type="entry name" value="ChlN_BchN"/>
    <property type="match status" value="1"/>
</dbReference>
<dbReference type="InterPro" id="IPR050293">
    <property type="entry name" value="LIPOR_BchN/ChlN"/>
</dbReference>
<dbReference type="InterPro" id="IPR000510">
    <property type="entry name" value="Nase/OxRdtase_comp1"/>
</dbReference>
<dbReference type="InterPro" id="IPR005970">
    <property type="entry name" value="Protochl_reductN"/>
</dbReference>
<dbReference type="NCBIfam" id="TIGR01279">
    <property type="entry name" value="DPOR_bchN"/>
    <property type="match status" value="1"/>
</dbReference>
<dbReference type="NCBIfam" id="NF002768">
    <property type="entry name" value="PRK02842.1"/>
    <property type="match status" value="1"/>
</dbReference>
<dbReference type="PANTHER" id="PTHR39429">
    <property type="entry name" value="LIGHT-INDEPENDENT PROTOCHLOROPHYLLIDE REDUCTASE SUBUNIT N"/>
    <property type="match status" value="1"/>
</dbReference>
<dbReference type="PANTHER" id="PTHR39429:SF3">
    <property type="entry name" value="LIGHT-INDEPENDENT PROTOCHLOROPHYLLIDE REDUCTASE SUBUNIT N"/>
    <property type="match status" value="1"/>
</dbReference>
<dbReference type="Pfam" id="PF00148">
    <property type="entry name" value="Oxidored_nitro"/>
    <property type="match status" value="1"/>
</dbReference>
<dbReference type="PIRSF" id="PIRSF000162">
    <property type="entry name" value="P_chlorophyll_rd"/>
    <property type="match status" value="1"/>
</dbReference>
<dbReference type="SUPFAM" id="SSF53807">
    <property type="entry name" value="Helical backbone' metal receptor"/>
    <property type="match status" value="1"/>
</dbReference>
<comment type="function">
    <text evidence="1">Component of the dark-operative protochlorophyllide reductase (DPOR) that uses Mg-ATP and reduced ferredoxin to reduce ring D of protochlorophyllide (Pchlide) to form chlorophyllide a (Chlide). This reaction is light-independent. The NB-protein (ChlN-ChlB) is the catalytic component of the complex.</text>
</comment>
<comment type="catalytic activity">
    <reaction evidence="1">
        <text>chlorophyllide a + oxidized 2[4Fe-4S]-[ferredoxin] + 2 ADP + 2 phosphate = protochlorophyllide a + reduced 2[4Fe-4S]-[ferredoxin] + 2 ATP + 2 H2O</text>
        <dbReference type="Rhea" id="RHEA:28202"/>
        <dbReference type="Rhea" id="RHEA-COMP:10002"/>
        <dbReference type="Rhea" id="RHEA-COMP:10004"/>
        <dbReference type="ChEBI" id="CHEBI:15377"/>
        <dbReference type="ChEBI" id="CHEBI:30616"/>
        <dbReference type="ChEBI" id="CHEBI:33722"/>
        <dbReference type="ChEBI" id="CHEBI:33723"/>
        <dbReference type="ChEBI" id="CHEBI:43474"/>
        <dbReference type="ChEBI" id="CHEBI:83348"/>
        <dbReference type="ChEBI" id="CHEBI:83350"/>
        <dbReference type="ChEBI" id="CHEBI:456216"/>
        <dbReference type="EC" id="1.3.7.7"/>
    </reaction>
</comment>
<comment type="cofactor">
    <cofactor evidence="1">
        <name>[4Fe-4S] cluster</name>
        <dbReference type="ChEBI" id="CHEBI:49883"/>
    </cofactor>
    <text evidence="1">Binds 1 [4Fe-4S] cluster per heterodimer. The cluster is bound at the heterodimer interface by residues from both subunits.</text>
</comment>
<comment type="pathway">
    <text evidence="1">Porphyrin-containing compound metabolism; chlorophyll biosynthesis (light-independent).</text>
</comment>
<comment type="subunit">
    <text evidence="1">Protochlorophyllide reductase is composed of three subunits; ChlL, ChlN and ChlB. Forms a heterotetramer of two ChlB and two ChlN subunits.</text>
</comment>
<comment type="similarity">
    <text evidence="1">Belongs to the BchN/ChlN family.</text>
</comment>